<name>RS2_BLOPB</name>
<proteinExistence type="inferred from homology"/>
<comment type="similarity">
    <text evidence="1">Belongs to the universal ribosomal protein uS2 family.</text>
</comment>
<gene>
    <name evidence="1" type="primary">rpsB</name>
    <name type="ordered locus">BPEN_279</name>
</gene>
<protein>
    <recommendedName>
        <fullName evidence="1">Small ribosomal subunit protein uS2</fullName>
    </recommendedName>
    <alternativeName>
        <fullName evidence="2">30S ribosomal protein S2</fullName>
    </alternativeName>
</protein>
<evidence type="ECO:0000255" key="1">
    <source>
        <dbReference type="HAMAP-Rule" id="MF_00291"/>
    </source>
</evidence>
<evidence type="ECO:0000305" key="2"/>
<feature type="chain" id="PRO_1000003898" description="Small ribosomal subunit protein uS2">
    <location>
        <begin position="1"/>
        <end position="228"/>
    </location>
</feature>
<organism>
    <name type="scientific">Blochmanniella pennsylvanica (strain BPEN)</name>
    <dbReference type="NCBI Taxonomy" id="291272"/>
    <lineage>
        <taxon>Bacteria</taxon>
        <taxon>Pseudomonadati</taxon>
        <taxon>Pseudomonadota</taxon>
        <taxon>Gammaproteobacteria</taxon>
        <taxon>Enterobacterales</taxon>
        <taxon>Enterobacteriaceae</taxon>
        <taxon>ant endosymbionts</taxon>
        <taxon>Candidatus Blochmanniella</taxon>
    </lineage>
</organism>
<dbReference type="EMBL" id="CP000016">
    <property type="protein sequence ID" value="AAZ40910.1"/>
    <property type="molecule type" value="Genomic_DNA"/>
</dbReference>
<dbReference type="RefSeq" id="WP_011282817.1">
    <property type="nucleotide sequence ID" value="NC_007292.1"/>
</dbReference>
<dbReference type="SMR" id="Q493D2"/>
<dbReference type="STRING" id="291272.BPEN_279"/>
<dbReference type="KEGG" id="bpn:BPEN_279"/>
<dbReference type="eggNOG" id="COG0052">
    <property type="taxonomic scope" value="Bacteria"/>
</dbReference>
<dbReference type="HOGENOM" id="CLU_040318_1_2_6"/>
<dbReference type="OrthoDB" id="9808036at2"/>
<dbReference type="Proteomes" id="UP000007794">
    <property type="component" value="Chromosome"/>
</dbReference>
<dbReference type="GO" id="GO:0022627">
    <property type="term" value="C:cytosolic small ribosomal subunit"/>
    <property type="evidence" value="ECO:0007669"/>
    <property type="project" value="TreeGrafter"/>
</dbReference>
<dbReference type="GO" id="GO:0003735">
    <property type="term" value="F:structural constituent of ribosome"/>
    <property type="evidence" value="ECO:0007669"/>
    <property type="project" value="InterPro"/>
</dbReference>
<dbReference type="GO" id="GO:0006412">
    <property type="term" value="P:translation"/>
    <property type="evidence" value="ECO:0007669"/>
    <property type="project" value="UniProtKB-UniRule"/>
</dbReference>
<dbReference type="CDD" id="cd01425">
    <property type="entry name" value="RPS2"/>
    <property type="match status" value="1"/>
</dbReference>
<dbReference type="FunFam" id="1.10.287.610:FF:000001">
    <property type="entry name" value="30S ribosomal protein S2"/>
    <property type="match status" value="1"/>
</dbReference>
<dbReference type="Gene3D" id="3.40.50.10490">
    <property type="entry name" value="Glucose-6-phosphate isomerase like protein, domain 1"/>
    <property type="match status" value="1"/>
</dbReference>
<dbReference type="Gene3D" id="1.10.287.610">
    <property type="entry name" value="Helix hairpin bin"/>
    <property type="match status" value="1"/>
</dbReference>
<dbReference type="HAMAP" id="MF_00291_B">
    <property type="entry name" value="Ribosomal_uS2_B"/>
    <property type="match status" value="1"/>
</dbReference>
<dbReference type="InterPro" id="IPR001865">
    <property type="entry name" value="Ribosomal_uS2"/>
</dbReference>
<dbReference type="InterPro" id="IPR005706">
    <property type="entry name" value="Ribosomal_uS2_bac/mit/plastid"/>
</dbReference>
<dbReference type="InterPro" id="IPR018130">
    <property type="entry name" value="Ribosomal_uS2_CS"/>
</dbReference>
<dbReference type="InterPro" id="IPR023591">
    <property type="entry name" value="Ribosomal_uS2_flav_dom_sf"/>
</dbReference>
<dbReference type="NCBIfam" id="TIGR01011">
    <property type="entry name" value="rpsB_bact"/>
    <property type="match status" value="1"/>
</dbReference>
<dbReference type="PANTHER" id="PTHR12534">
    <property type="entry name" value="30S RIBOSOMAL PROTEIN S2 PROKARYOTIC AND ORGANELLAR"/>
    <property type="match status" value="1"/>
</dbReference>
<dbReference type="PANTHER" id="PTHR12534:SF0">
    <property type="entry name" value="SMALL RIBOSOMAL SUBUNIT PROTEIN US2M"/>
    <property type="match status" value="1"/>
</dbReference>
<dbReference type="Pfam" id="PF00318">
    <property type="entry name" value="Ribosomal_S2"/>
    <property type="match status" value="1"/>
</dbReference>
<dbReference type="PRINTS" id="PR00395">
    <property type="entry name" value="RIBOSOMALS2"/>
</dbReference>
<dbReference type="SUPFAM" id="SSF52313">
    <property type="entry name" value="Ribosomal protein S2"/>
    <property type="match status" value="1"/>
</dbReference>
<dbReference type="PROSITE" id="PS00962">
    <property type="entry name" value="RIBOSOMAL_S2_1"/>
    <property type="match status" value="1"/>
</dbReference>
<sequence>MENISIRDMLQAGVHFGHQTRYWNPKMKPFIFGVRNKIHIIDLETTSVMFRQALIELNKIAALKGKILFVGTKRAASESVKKTALACNQFFVNHRWLGGMLTNWKTVRQSIKRLKDLEIQSQDGTFKKLTKKEALILNRELINLENSLGGIKNMGGLPDAIFAVGATHEHIAIKEANSLGIPVFAIVDTNSNPDGIDFVIPGNDDAVRAINLYLNIISNMIHINACNT</sequence>
<accession>Q493D2</accession>
<keyword id="KW-1185">Reference proteome</keyword>
<keyword id="KW-0687">Ribonucleoprotein</keyword>
<keyword id="KW-0689">Ribosomal protein</keyword>
<reference key="1">
    <citation type="journal article" date="2005" name="Genome Res.">
        <title>Genome sequence of Blochmannia pennsylvanicus indicates parallel evolutionary trends among bacterial mutualists of insects.</title>
        <authorList>
            <person name="Degnan P.H."/>
            <person name="Lazarus A.B."/>
            <person name="Wernegreen J.J."/>
        </authorList>
    </citation>
    <scope>NUCLEOTIDE SEQUENCE [LARGE SCALE GENOMIC DNA]</scope>
    <source>
        <strain>BPEN</strain>
    </source>
</reference>